<organism>
    <name type="scientific">Xylella fastidiosa (strain M12)</name>
    <dbReference type="NCBI Taxonomy" id="405440"/>
    <lineage>
        <taxon>Bacteria</taxon>
        <taxon>Pseudomonadati</taxon>
        <taxon>Pseudomonadota</taxon>
        <taxon>Gammaproteobacteria</taxon>
        <taxon>Lysobacterales</taxon>
        <taxon>Lysobacteraceae</taxon>
        <taxon>Xylella</taxon>
    </lineage>
</organism>
<feature type="chain" id="PRO_0000370177" description="3-deoxy-manno-octulosonate cytidylyltransferase">
    <location>
        <begin position="1"/>
        <end position="257"/>
    </location>
</feature>
<proteinExistence type="inferred from homology"/>
<protein>
    <recommendedName>
        <fullName evidence="1">3-deoxy-manno-octulosonate cytidylyltransferase</fullName>
        <ecNumber evidence="1">2.7.7.38</ecNumber>
    </recommendedName>
    <alternativeName>
        <fullName evidence="1">CMP-2-keto-3-deoxyoctulosonic acid synthase</fullName>
        <shortName evidence="1">CKS</shortName>
        <shortName evidence="1">CMP-KDO synthase</shortName>
    </alternativeName>
</protein>
<keyword id="KW-0963">Cytoplasm</keyword>
<keyword id="KW-0448">Lipopolysaccharide biosynthesis</keyword>
<keyword id="KW-0548">Nucleotidyltransferase</keyword>
<keyword id="KW-0808">Transferase</keyword>
<sequence length="257" mass="27864">MSLEIVPFVVAIPARFSASRLPGKPLRLLGGRPLIHRVAERALSAGAREVWVATDDVRIAEAVASLDGVHVAITANTHLSGSDRLAECARIAGWDPEVCVVNLQGDEPFAPAAGIRAVAALLHHSNADMATLATTIDKSEDLFNPNIVKLVCNAHGEALYFSRAPIPWNRDTFATTREPTPLGPWLRHIGLYACNAGFLQRFTTMQPGTLEQIESLEQLRVLEAGHRIAVRITPEHFPPGIDTPEDLAKAEKALEDV</sequence>
<reference key="1">
    <citation type="journal article" date="2010" name="J. Bacteriol.">
        <title>Whole genome sequences of two Xylella fastidiosa strains (M12 and M23) causing almond leaf scorch disease in California.</title>
        <authorList>
            <person name="Chen J."/>
            <person name="Xie G."/>
            <person name="Han S."/>
            <person name="Chertkov O."/>
            <person name="Sims D."/>
            <person name="Civerolo E.L."/>
        </authorList>
    </citation>
    <scope>NUCLEOTIDE SEQUENCE [LARGE SCALE GENOMIC DNA]</scope>
    <source>
        <strain>M12</strain>
    </source>
</reference>
<gene>
    <name evidence="1" type="primary">kdsB</name>
    <name type="ordered locus">Xfasm12_1327</name>
</gene>
<comment type="function">
    <text evidence="1">Activates KDO (a required 8-carbon sugar) for incorporation into bacterial lipopolysaccharide in Gram-negative bacteria.</text>
</comment>
<comment type="catalytic activity">
    <reaction evidence="1">
        <text>3-deoxy-alpha-D-manno-oct-2-ulosonate + CTP = CMP-3-deoxy-beta-D-manno-octulosonate + diphosphate</text>
        <dbReference type="Rhea" id="RHEA:23448"/>
        <dbReference type="ChEBI" id="CHEBI:33019"/>
        <dbReference type="ChEBI" id="CHEBI:37563"/>
        <dbReference type="ChEBI" id="CHEBI:85986"/>
        <dbReference type="ChEBI" id="CHEBI:85987"/>
        <dbReference type="EC" id="2.7.7.38"/>
    </reaction>
</comment>
<comment type="pathway">
    <text evidence="1">Nucleotide-sugar biosynthesis; CMP-3-deoxy-D-manno-octulosonate biosynthesis; CMP-3-deoxy-D-manno-octulosonate from 3-deoxy-D-manno-octulosonate and CTP: step 1/1.</text>
</comment>
<comment type="pathway">
    <text evidence="1">Bacterial outer membrane biogenesis; lipopolysaccharide biosynthesis.</text>
</comment>
<comment type="subcellular location">
    <subcellularLocation>
        <location evidence="1">Cytoplasm</location>
    </subcellularLocation>
</comment>
<comment type="similarity">
    <text evidence="1">Belongs to the KdsB family.</text>
</comment>
<name>KDSB_XYLFM</name>
<evidence type="ECO:0000255" key="1">
    <source>
        <dbReference type="HAMAP-Rule" id="MF_00057"/>
    </source>
</evidence>
<dbReference type="EC" id="2.7.7.38" evidence="1"/>
<dbReference type="EMBL" id="CP000941">
    <property type="protein sequence ID" value="ACA12259.1"/>
    <property type="molecule type" value="Genomic_DNA"/>
</dbReference>
<dbReference type="RefSeq" id="WP_004085698.1">
    <property type="nucleotide sequence ID" value="NC_010513.1"/>
</dbReference>
<dbReference type="SMR" id="B0U330"/>
<dbReference type="KEGG" id="xfm:Xfasm12_1327"/>
<dbReference type="HOGENOM" id="CLU_065038_1_0_6"/>
<dbReference type="UniPathway" id="UPA00030"/>
<dbReference type="UniPathway" id="UPA00358">
    <property type="reaction ID" value="UER00476"/>
</dbReference>
<dbReference type="GO" id="GO:0005829">
    <property type="term" value="C:cytosol"/>
    <property type="evidence" value="ECO:0007669"/>
    <property type="project" value="TreeGrafter"/>
</dbReference>
<dbReference type="GO" id="GO:0008690">
    <property type="term" value="F:3-deoxy-manno-octulosonate cytidylyltransferase activity"/>
    <property type="evidence" value="ECO:0007669"/>
    <property type="project" value="UniProtKB-UniRule"/>
</dbReference>
<dbReference type="GO" id="GO:0033468">
    <property type="term" value="P:CMP-keto-3-deoxy-D-manno-octulosonic acid biosynthetic process"/>
    <property type="evidence" value="ECO:0007669"/>
    <property type="project" value="UniProtKB-UniRule"/>
</dbReference>
<dbReference type="GO" id="GO:0009103">
    <property type="term" value="P:lipopolysaccharide biosynthetic process"/>
    <property type="evidence" value="ECO:0007669"/>
    <property type="project" value="UniProtKB-UniRule"/>
</dbReference>
<dbReference type="CDD" id="cd02517">
    <property type="entry name" value="CMP-KDO-Synthetase"/>
    <property type="match status" value="1"/>
</dbReference>
<dbReference type="FunFam" id="3.90.550.10:FF:000011">
    <property type="entry name" value="3-deoxy-manno-octulosonate cytidylyltransferase"/>
    <property type="match status" value="1"/>
</dbReference>
<dbReference type="Gene3D" id="3.90.550.10">
    <property type="entry name" value="Spore Coat Polysaccharide Biosynthesis Protein SpsA, Chain A"/>
    <property type="match status" value="1"/>
</dbReference>
<dbReference type="HAMAP" id="MF_00057">
    <property type="entry name" value="KdsB"/>
    <property type="match status" value="1"/>
</dbReference>
<dbReference type="InterPro" id="IPR003329">
    <property type="entry name" value="Cytidylyl_trans"/>
</dbReference>
<dbReference type="InterPro" id="IPR004528">
    <property type="entry name" value="KdsB"/>
</dbReference>
<dbReference type="InterPro" id="IPR029044">
    <property type="entry name" value="Nucleotide-diphossugar_trans"/>
</dbReference>
<dbReference type="NCBIfam" id="TIGR00466">
    <property type="entry name" value="kdsB"/>
    <property type="match status" value="1"/>
</dbReference>
<dbReference type="NCBIfam" id="NF003952">
    <property type="entry name" value="PRK05450.1-5"/>
    <property type="match status" value="1"/>
</dbReference>
<dbReference type="PANTHER" id="PTHR42866">
    <property type="entry name" value="3-DEOXY-MANNO-OCTULOSONATE CYTIDYLYLTRANSFERASE"/>
    <property type="match status" value="1"/>
</dbReference>
<dbReference type="PANTHER" id="PTHR42866:SF2">
    <property type="entry name" value="3-DEOXY-MANNO-OCTULOSONATE CYTIDYLYLTRANSFERASE, MITOCHONDRIAL"/>
    <property type="match status" value="1"/>
</dbReference>
<dbReference type="Pfam" id="PF02348">
    <property type="entry name" value="CTP_transf_3"/>
    <property type="match status" value="1"/>
</dbReference>
<dbReference type="SUPFAM" id="SSF53448">
    <property type="entry name" value="Nucleotide-diphospho-sugar transferases"/>
    <property type="match status" value="1"/>
</dbReference>
<accession>B0U330</accession>